<evidence type="ECO:0000255" key="1">
    <source>
        <dbReference type="HAMAP-Rule" id="MF_00019"/>
    </source>
</evidence>
<feature type="chain" id="PRO_1000116369" description="Phosphate acyltransferase">
    <location>
        <begin position="1"/>
        <end position="329"/>
    </location>
</feature>
<sequence length="329" mass="35363">MKIAIDAMGGDHAPKEIVIGAQKAIEHFQDIEITLVGNETLIRPYITNDERLSIIHTEQVIEATDEPVRAVRRKKEASMVLMANEVSEGRAHACISAGNTGALMAAGLFIVGRIDGIDRPALAPTLPTIDGKGFVLLDVGANVDARPEHILQYALMGAAYAEKVRGIHRPRIGLLNVGTEDQKGNELAKKTFQLIQDTSLNFVGNVEARDLLEGVADVVVTDGFTGNVALKTIEGTAIAVFSMLKSALTSNVVSKMAALALKPQLMQLKKKMDYAEYGGAALFGLRAPVIKAHGSSDAHAIFHAVRQAREMVVNDVIQTVKQSIAEIKQ</sequence>
<comment type="function">
    <text evidence="1">Catalyzes the reversible formation of acyl-phosphate (acyl-PO(4)) from acyl-[acyl-carrier-protein] (acyl-ACP). This enzyme utilizes acyl-ACP as fatty acyl donor, but not acyl-CoA.</text>
</comment>
<comment type="catalytic activity">
    <reaction evidence="1">
        <text>a fatty acyl-[ACP] + phosphate = an acyl phosphate + holo-[ACP]</text>
        <dbReference type="Rhea" id="RHEA:42292"/>
        <dbReference type="Rhea" id="RHEA-COMP:9685"/>
        <dbReference type="Rhea" id="RHEA-COMP:14125"/>
        <dbReference type="ChEBI" id="CHEBI:43474"/>
        <dbReference type="ChEBI" id="CHEBI:59918"/>
        <dbReference type="ChEBI" id="CHEBI:64479"/>
        <dbReference type="ChEBI" id="CHEBI:138651"/>
        <dbReference type="EC" id="2.3.1.274"/>
    </reaction>
</comment>
<comment type="pathway">
    <text evidence="1">Lipid metabolism; phospholipid metabolism.</text>
</comment>
<comment type="subunit">
    <text evidence="1">Homodimer. Probably interacts with PlsY.</text>
</comment>
<comment type="subcellular location">
    <subcellularLocation>
        <location evidence="1">Cytoplasm</location>
    </subcellularLocation>
    <text evidence="1">Associated with the membrane possibly through PlsY.</text>
</comment>
<comment type="similarity">
    <text evidence="1">Belongs to the PlsX family.</text>
</comment>
<keyword id="KW-0963">Cytoplasm</keyword>
<keyword id="KW-0444">Lipid biosynthesis</keyword>
<keyword id="KW-0443">Lipid metabolism</keyword>
<keyword id="KW-0594">Phospholipid biosynthesis</keyword>
<keyword id="KW-1208">Phospholipid metabolism</keyword>
<keyword id="KW-0808">Transferase</keyword>
<dbReference type="EC" id="2.3.1.274" evidence="1"/>
<dbReference type="EMBL" id="CP000922">
    <property type="protein sequence ID" value="ACJ34135.1"/>
    <property type="molecule type" value="Genomic_DNA"/>
</dbReference>
<dbReference type="RefSeq" id="WP_012575335.1">
    <property type="nucleotide sequence ID" value="NC_011567.1"/>
</dbReference>
<dbReference type="SMR" id="B7GGF3"/>
<dbReference type="STRING" id="491915.Aflv_1774"/>
<dbReference type="GeneID" id="7038027"/>
<dbReference type="KEGG" id="afl:Aflv_1774"/>
<dbReference type="PATRIC" id="fig|491915.6.peg.1823"/>
<dbReference type="eggNOG" id="COG0416">
    <property type="taxonomic scope" value="Bacteria"/>
</dbReference>
<dbReference type="HOGENOM" id="CLU_039379_1_1_9"/>
<dbReference type="UniPathway" id="UPA00085"/>
<dbReference type="Proteomes" id="UP000000742">
    <property type="component" value="Chromosome"/>
</dbReference>
<dbReference type="GO" id="GO:0005737">
    <property type="term" value="C:cytoplasm"/>
    <property type="evidence" value="ECO:0007669"/>
    <property type="project" value="UniProtKB-SubCell"/>
</dbReference>
<dbReference type="GO" id="GO:0043811">
    <property type="term" value="F:phosphate:acyl-[acyl carrier protein] acyltransferase activity"/>
    <property type="evidence" value="ECO:0007669"/>
    <property type="project" value="UniProtKB-UniRule"/>
</dbReference>
<dbReference type="GO" id="GO:0006633">
    <property type="term" value="P:fatty acid biosynthetic process"/>
    <property type="evidence" value="ECO:0007669"/>
    <property type="project" value="UniProtKB-UniRule"/>
</dbReference>
<dbReference type="GO" id="GO:0008654">
    <property type="term" value="P:phospholipid biosynthetic process"/>
    <property type="evidence" value="ECO:0007669"/>
    <property type="project" value="UniProtKB-KW"/>
</dbReference>
<dbReference type="Gene3D" id="3.40.718.10">
    <property type="entry name" value="Isopropylmalate Dehydrogenase"/>
    <property type="match status" value="1"/>
</dbReference>
<dbReference type="HAMAP" id="MF_00019">
    <property type="entry name" value="PlsX"/>
    <property type="match status" value="1"/>
</dbReference>
<dbReference type="InterPro" id="IPR003664">
    <property type="entry name" value="FA_synthesis"/>
</dbReference>
<dbReference type="InterPro" id="IPR012281">
    <property type="entry name" value="Phospholipid_synth_PlsX-like"/>
</dbReference>
<dbReference type="NCBIfam" id="TIGR00182">
    <property type="entry name" value="plsX"/>
    <property type="match status" value="1"/>
</dbReference>
<dbReference type="PANTHER" id="PTHR30100">
    <property type="entry name" value="FATTY ACID/PHOSPHOLIPID SYNTHESIS PROTEIN PLSX"/>
    <property type="match status" value="1"/>
</dbReference>
<dbReference type="PANTHER" id="PTHR30100:SF1">
    <property type="entry name" value="PHOSPHATE ACYLTRANSFERASE"/>
    <property type="match status" value="1"/>
</dbReference>
<dbReference type="Pfam" id="PF02504">
    <property type="entry name" value="FA_synthesis"/>
    <property type="match status" value="1"/>
</dbReference>
<dbReference type="PIRSF" id="PIRSF002465">
    <property type="entry name" value="Phsphlp_syn_PlsX"/>
    <property type="match status" value="1"/>
</dbReference>
<dbReference type="SUPFAM" id="SSF53659">
    <property type="entry name" value="Isocitrate/Isopropylmalate dehydrogenase-like"/>
    <property type="match status" value="1"/>
</dbReference>
<reference key="1">
    <citation type="journal article" date="2008" name="Genome Biol.">
        <title>Encapsulated in silica: genome, proteome and physiology of the thermophilic bacterium Anoxybacillus flavithermus WK1.</title>
        <authorList>
            <person name="Saw J.H."/>
            <person name="Mountain B.W."/>
            <person name="Feng L."/>
            <person name="Omelchenko M.V."/>
            <person name="Hou S."/>
            <person name="Saito J.A."/>
            <person name="Stott M.B."/>
            <person name="Li D."/>
            <person name="Zhao G."/>
            <person name="Wu J."/>
            <person name="Galperin M.Y."/>
            <person name="Koonin E.V."/>
            <person name="Makarova K.S."/>
            <person name="Wolf Y.I."/>
            <person name="Rigden D.J."/>
            <person name="Dunfield P.F."/>
            <person name="Wang L."/>
            <person name="Alam M."/>
        </authorList>
    </citation>
    <scope>NUCLEOTIDE SEQUENCE [LARGE SCALE GENOMIC DNA]</scope>
    <source>
        <strain>DSM 21510 / WK1</strain>
    </source>
</reference>
<name>PLSX_ANOFW</name>
<gene>
    <name evidence="1" type="primary">plsX</name>
    <name type="ordered locus">Aflv_1774</name>
</gene>
<protein>
    <recommendedName>
        <fullName evidence="1">Phosphate acyltransferase</fullName>
        <ecNumber evidence="1">2.3.1.274</ecNumber>
    </recommendedName>
    <alternativeName>
        <fullName evidence="1">Acyl-ACP phosphotransacylase</fullName>
    </alternativeName>
    <alternativeName>
        <fullName evidence="1">Acyl-[acyl-carrier-protein]--phosphate acyltransferase</fullName>
    </alternativeName>
    <alternativeName>
        <fullName evidence="1">Phosphate-acyl-ACP acyltransferase</fullName>
    </alternativeName>
</protein>
<accession>B7GGF3</accession>
<proteinExistence type="inferred from homology"/>
<organism>
    <name type="scientific">Anoxybacillus flavithermus (strain DSM 21510 / WK1)</name>
    <dbReference type="NCBI Taxonomy" id="491915"/>
    <lineage>
        <taxon>Bacteria</taxon>
        <taxon>Bacillati</taxon>
        <taxon>Bacillota</taxon>
        <taxon>Bacilli</taxon>
        <taxon>Bacillales</taxon>
        <taxon>Anoxybacillaceae</taxon>
        <taxon>Anoxybacillus</taxon>
    </lineage>
</organism>